<keyword id="KW-0106">Calcium</keyword>
<keyword id="KW-1015">Disulfide bond</keyword>
<keyword id="KW-0378">Hydrolase</keyword>
<keyword id="KW-0442">Lipid degradation</keyword>
<keyword id="KW-0443">Lipid metabolism</keyword>
<keyword id="KW-0479">Metal-binding</keyword>
<keyword id="KW-0528">Neurotoxin</keyword>
<keyword id="KW-0638">Presynaptic neurotoxin</keyword>
<keyword id="KW-0964">Secreted</keyword>
<keyword id="KW-0732">Signal</keyword>
<keyword id="KW-0800">Toxin</keyword>
<organism>
    <name type="scientific">Bungarus caeruleus</name>
    <name type="common">Indian krait</name>
    <dbReference type="NCBI Taxonomy" id="132961"/>
    <lineage>
        <taxon>Eukaryota</taxon>
        <taxon>Metazoa</taxon>
        <taxon>Chordata</taxon>
        <taxon>Craniata</taxon>
        <taxon>Vertebrata</taxon>
        <taxon>Euteleostomi</taxon>
        <taxon>Lepidosauria</taxon>
        <taxon>Squamata</taxon>
        <taxon>Bifurcata</taxon>
        <taxon>Unidentata</taxon>
        <taxon>Episquamata</taxon>
        <taxon>Toxicofera</taxon>
        <taxon>Serpentes</taxon>
        <taxon>Colubroidea</taxon>
        <taxon>Elapidae</taxon>
        <taxon>Bungarinae</taxon>
        <taxon>Bungarus</taxon>
    </lineage>
</organism>
<sequence length="147" mass="16358">MYPAHLLILSAVCVSLLGAANIPPHPLNLINFMNMIRYTIPCEKTWGEYTNYGCYCGAGGSGTPIDALDRCCYVHDNCYGDAEKIHKCSPKTQSYSYKLTRRTIICYGAAGTCARIVCDCDRTAALCFGDSEYIEGHKRIDTKRYCQ</sequence>
<feature type="signal peptide" evidence="4">
    <location>
        <begin position="1"/>
        <end position="19"/>
    </location>
</feature>
<feature type="propeptide" id="PRO_0000022823" evidence="2">
    <location>
        <begin position="20"/>
        <end position="27"/>
    </location>
</feature>
<feature type="chain" id="PRO_0000022824" description="Basic phospholipase A2 beta-bungarotoxin A1 chain" evidence="2">
    <location>
        <begin position="28"/>
        <end position="147"/>
    </location>
</feature>
<feature type="active site" evidence="3">
    <location>
        <position position="75"/>
    </location>
</feature>
<feature type="active site" evidence="3">
    <location>
        <position position="121"/>
    </location>
</feature>
<feature type="binding site" evidence="2">
    <location>
        <position position="55"/>
    </location>
    <ligand>
        <name>Ca(2+)</name>
        <dbReference type="ChEBI" id="CHEBI:29108"/>
    </ligand>
</feature>
<feature type="binding site" evidence="2">
    <location>
        <position position="57"/>
    </location>
    <ligand>
        <name>Ca(2+)</name>
        <dbReference type="ChEBI" id="CHEBI:29108"/>
    </ligand>
</feature>
<feature type="binding site" evidence="2">
    <location>
        <position position="59"/>
    </location>
    <ligand>
        <name>Ca(2+)</name>
        <dbReference type="ChEBI" id="CHEBI:29108"/>
    </ligand>
</feature>
<feature type="binding site" evidence="2">
    <location>
        <position position="76"/>
    </location>
    <ligand>
        <name>Ca(2+)</name>
        <dbReference type="ChEBI" id="CHEBI:29108"/>
    </ligand>
</feature>
<feature type="disulfide bond" description="Interchain (with a B chain)" evidence="2">
    <location>
        <position position="42"/>
    </location>
</feature>
<feature type="disulfide bond" evidence="2">
    <location>
        <begin position="54"/>
        <end position="146"/>
    </location>
</feature>
<feature type="disulfide bond" evidence="2">
    <location>
        <begin position="56"/>
        <end position="72"/>
    </location>
</feature>
<feature type="disulfide bond" evidence="2">
    <location>
        <begin position="71"/>
        <end position="127"/>
    </location>
</feature>
<feature type="disulfide bond" evidence="2">
    <location>
        <begin position="78"/>
        <end position="120"/>
    </location>
</feature>
<feature type="disulfide bond" evidence="2">
    <location>
        <begin position="88"/>
        <end position="113"/>
    </location>
</feature>
<feature type="disulfide bond" evidence="2">
    <location>
        <begin position="106"/>
        <end position="118"/>
    </location>
</feature>
<evidence type="ECO:0000250" key="1"/>
<evidence type="ECO:0000250" key="2">
    <source>
        <dbReference type="UniProtKB" id="P00617"/>
    </source>
</evidence>
<evidence type="ECO:0000250" key="3">
    <source>
        <dbReference type="UniProtKB" id="P14418"/>
    </source>
</evidence>
<evidence type="ECO:0000255" key="4"/>
<evidence type="ECO:0000255" key="5">
    <source>
        <dbReference type="PROSITE-ProRule" id="PRU10035"/>
    </source>
</evidence>
<evidence type="ECO:0000255" key="6">
    <source>
        <dbReference type="PROSITE-ProRule" id="PRU10036"/>
    </source>
</evidence>
<evidence type="ECO:0000305" key="7"/>
<evidence type="ECO:0000305" key="8">
    <source ref="1"/>
</evidence>
<proteinExistence type="evidence at transcript level"/>
<reference key="1">
    <citation type="submission" date="2002-02" db="EMBL/GenBank/DDBJ databases">
        <title>Bungarus caeruleus mRNA for beta-bungarotoxin A1 chain complete coding region.</title>
        <authorList>
            <person name="Paramasivam M."/>
            <person name="Srinivasan A."/>
            <person name="Singh T.P."/>
        </authorList>
    </citation>
    <scope>NUCLEOTIDE SEQUENCE [MRNA]</scope>
    <source>
        <tissue>Venom gland</tissue>
    </source>
</reference>
<name>PA2B1_BUNCE</name>
<comment type="function">
    <text evidence="1">Snake venom phospholipase A2 (PLA2) that inhibits neuromuscular transmission by blocking acetylcholine release from the nerve termini. PLA2 catalyzes the calcium-dependent hydrolysis of the 2-acyl groups in 3-sn-phosphoglycerides (By similarity).</text>
</comment>
<comment type="catalytic activity">
    <reaction evidence="5 6">
        <text>a 1,2-diacyl-sn-glycero-3-phosphocholine + H2O = a 1-acyl-sn-glycero-3-phosphocholine + a fatty acid + H(+)</text>
        <dbReference type="Rhea" id="RHEA:15801"/>
        <dbReference type="ChEBI" id="CHEBI:15377"/>
        <dbReference type="ChEBI" id="CHEBI:15378"/>
        <dbReference type="ChEBI" id="CHEBI:28868"/>
        <dbReference type="ChEBI" id="CHEBI:57643"/>
        <dbReference type="ChEBI" id="CHEBI:58168"/>
        <dbReference type="EC" id="3.1.1.4"/>
    </reaction>
</comment>
<comment type="cofactor">
    <cofactor evidence="2">
        <name>Ca(2+)</name>
        <dbReference type="ChEBI" id="CHEBI:29108"/>
    </cofactor>
    <text evidence="2">Binds 1 Ca(2+) ion.</text>
</comment>
<comment type="subunit">
    <text evidence="2">Heterodimer; disulfide-linked. The A chains have phospholipase A2 activity and the B chains show homology with the basic protease inhibitors.</text>
</comment>
<comment type="subcellular location">
    <subcellularLocation>
        <location evidence="8">Secreted</location>
    </subcellularLocation>
</comment>
<comment type="tissue specificity">
    <text evidence="8">Expressed by the venom gland.</text>
</comment>
<comment type="similarity">
    <text evidence="7">Belongs to the phospholipase A2 family. Group I subfamily. D49 sub-subfamily.</text>
</comment>
<protein>
    <recommendedName>
        <fullName>Basic phospholipase A2 beta-bungarotoxin A1 chain</fullName>
        <shortName>Beta-BuTX A1 chain</shortName>
        <shortName>svPLA2</shortName>
        <ecNumber>3.1.1.4</ecNumber>
    </recommendedName>
    <alternativeName>
        <fullName>Phosphatidylcholine 2-acylhydrolase</fullName>
    </alternativeName>
</protein>
<accession>Q8QFW4</accession>
<dbReference type="EC" id="3.1.1.4"/>
<dbReference type="EMBL" id="AY081146">
    <property type="protein sequence ID" value="AAL87003.1"/>
    <property type="molecule type" value="mRNA"/>
</dbReference>
<dbReference type="SMR" id="Q8QFW4"/>
<dbReference type="GO" id="GO:0005576">
    <property type="term" value="C:extracellular region"/>
    <property type="evidence" value="ECO:0007669"/>
    <property type="project" value="UniProtKB-SubCell"/>
</dbReference>
<dbReference type="GO" id="GO:0005509">
    <property type="term" value="F:calcium ion binding"/>
    <property type="evidence" value="ECO:0007669"/>
    <property type="project" value="InterPro"/>
</dbReference>
<dbReference type="GO" id="GO:0047498">
    <property type="term" value="F:calcium-dependent phospholipase A2 activity"/>
    <property type="evidence" value="ECO:0007669"/>
    <property type="project" value="TreeGrafter"/>
</dbReference>
<dbReference type="GO" id="GO:0005543">
    <property type="term" value="F:phospholipid binding"/>
    <property type="evidence" value="ECO:0007669"/>
    <property type="project" value="TreeGrafter"/>
</dbReference>
<dbReference type="GO" id="GO:0090729">
    <property type="term" value="F:toxin activity"/>
    <property type="evidence" value="ECO:0007669"/>
    <property type="project" value="UniProtKB-KW"/>
</dbReference>
<dbReference type="GO" id="GO:0050482">
    <property type="term" value="P:arachidonate secretion"/>
    <property type="evidence" value="ECO:0007669"/>
    <property type="project" value="InterPro"/>
</dbReference>
<dbReference type="GO" id="GO:0016042">
    <property type="term" value="P:lipid catabolic process"/>
    <property type="evidence" value="ECO:0007669"/>
    <property type="project" value="UniProtKB-KW"/>
</dbReference>
<dbReference type="GO" id="GO:0006644">
    <property type="term" value="P:phospholipid metabolic process"/>
    <property type="evidence" value="ECO:0007669"/>
    <property type="project" value="InterPro"/>
</dbReference>
<dbReference type="CDD" id="cd00125">
    <property type="entry name" value="PLA2c"/>
    <property type="match status" value="1"/>
</dbReference>
<dbReference type="FunFam" id="1.20.90.10:FF:000007">
    <property type="entry name" value="Acidic phospholipase A2"/>
    <property type="match status" value="1"/>
</dbReference>
<dbReference type="Gene3D" id="1.20.90.10">
    <property type="entry name" value="Phospholipase A2 domain"/>
    <property type="match status" value="1"/>
</dbReference>
<dbReference type="InterPro" id="IPR001211">
    <property type="entry name" value="PLipase_A2"/>
</dbReference>
<dbReference type="InterPro" id="IPR033112">
    <property type="entry name" value="PLipase_A2_Asp_AS"/>
</dbReference>
<dbReference type="InterPro" id="IPR016090">
    <property type="entry name" value="PLipase_A2_dom"/>
</dbReference>
<dbReference type="InterPro" id="IPR036444">
    <property type="entry name" value="PLipase_A2_dom_sf"/>
</dbReference>
<dbReference type="InterPro" id="IPR033113">
    <property type="entry name" value="PLipase_A2_His_AS"/>
</dbReference>
<dbReference type="PANTHER" id="PTHR11716:SF100">
    <property type="entry name" value="PHOSPHOLIPASE A2"/>
    <property type="match status" value="1"/>
</dbReference>
<dbReference type="PANTHER" id="PTHR11716">
    <property type="entry name" value="PHOSPHOLIPASE A2 FAMILY MEMBER"/>
    <property type="match status" value="1"/>
</dbReference>
<dbReference type="Pfam" id="PF00068">
    <property type="entry name" value="Phospholip_A2_1"/>
    <property type="match status" value="1"/>
</dbReference>
<dbReference type="PRINTS" id="PR00389">
    <property type="entry name" value="PHPHLIPASEA2"/>
</dbReference>
<dbReference type="SMART" id="SM00085">
    <property type="entry name" value="PA2c"/>
    <property type="match status" value="1"/>
</dbReference>
<dbReference type="SUPFAM" id="SSF48619">
    <property type="entry name" value="Phospholipase A2, PLA2"/>
    <property type="match status" value="1"/>
</dbReference>
<dbReference type="PROSITE" id="PS00119">
    <property type="entry name" value="PA2_ASP"/>
    <property type="match status" value="1"/>
</dbReference>
<dbReference type="PROSITE" id="PS00118">
    <property type="entry name" value="PA2_HIS"/>
    <property type="match status" value="1"/>
</dbReference>